<feature type="chain" id="PRO_0000437311" description="Fusaric acid biosynthesis protein 2">
    <location>
        <begin position="1"/>
        <end position="104"/>
    </location>
</feature>
<gene>
    <name evidence="12" type="primary">FUB2</name>
    <name type="ORF">FVEG_12522</name>
</gene>
<dbReference type="EMBL" id="CM000580">
    <property type="protein sequence ID" value="EWG54264.1"/>
    <property type="molecule type" value="Genomic_DNA"/>
</dbReference>
<dbReference type="RefSeq" id="XP_018760455.1">
    <property type="nucleotide sequence ID" value="XM_018901863.1"/>
</dbReference>
<dbReference type="SMR" id="W7N2B2"/>
<dbReference type="STRING" id="334819.W7N2B2"/>
<dbReference type="EnsemblFungi" id="FVEG_12522T0">
    <property type="protein sequence ID" value="FVEG_12522T0"/>
    <property type="gene ID" value="FVEG_12522"/>
</dbReference>
<dbReference type="GeneID" id="30069956"/>
<dbReference type="KEGG" id="fvr:FVEG_12522"/>
<dbReference type="VEuPathDB" id="FungiDB:FVEG_12522"/>
<dbReference type="HOGENOM" id="CLU_110355_2_4_1"/>
<dbReference type="OMA" id="MSEKYDW"/>
<dbReference type="OrthoDB" id="38691at110618"/>
<dbReference type="PHI-base" id="PHI:3388"/>
<dbReference type="Proteomes" id="UP000009096">
    <property type="component" value="Chromosome 3"/>
</dbReference>
<dbReference type="Gene3D" id="3.30.70.1060">
    <property type="entry name" value="Dimeric alpha+beta barrel"/>
    <property type="match status" value="1"/>
</dbReference>
<dbReference type="InterPro" id="IPR011008">
    <property type="entry name" value="Dimeric_a/b-barrel"/>
</dbReference>
<dbReference type="InterPro" id="IPR051807">
    <property type="entry name" value="Sec-metab_biosynth-assoc"/>
</dbReference>
<dbReference type="InterPro" id="IPR005545">
    <property type="entry name" value="YCII"/>
</dbReference>
<dbReference type="PANTHER" id="PTHR33606">
    <property type="entry name" value="PROTEIN YCII"/>
    <property type="match status" value="1"/>
</dbReference>
<dbReference type="PANTHER" id="PTHR33606:SF3">
    <property type="entry name" value="PROTEIN YCII"/>
    <property type="match status" value="1"/>
</dbReference>
<dbReference type="Pfam" id="PF03795">
    <property type="entry name" value="YCII"/>
    <property type="match status" value="1"/>
</dbReference>
<dbReference type="SUPFAM" id="SSF54909">
    <property type="entry name" value="Dimeric alpha+beta barrel"/>
    <property type="match status" value="1"/>
</dbReference>
<evidence type="ECO:0000250" key="1">
    <source>
        <dbReference type="UniProtKB" id="S0DRX0"/>
    </source>
</evidence>
<evidence type="ECO:0000269" key="2">
    <source>
    </source>
</evidence>
<evidence type="ECO:0000269" key="3">
    <source>
    </source>
</evidence>
<evidence type="ECO:0000269" key="4">
    <source>
    </source>
</evidence>
<evidence type="ECO:0000269" key="5">
    <source>
    </source>
</evidence>
<evidence type="ECO:0000269" key="6">
    <source>
    </source>
</evidence>
<evidence type="ECO:0000269" key="7">
    <source>
    </source>
</evidence>
<evidence type="ECO:0000269" key="8">
    <source>
    </source>
</evidence>
<evidence type="ECO:0000269" key="9">
    <source>
    </source>
</evidence>
<evidence type="ECO:0000269" key="10">
    <source>
    </source>
</evidence>
<evidence type="ECO:0000269" key="11">
    <source>
    </source>
</evidence>
<evidence type="ECO:0000303" key="12">
    <source>
    </source>
</evidence>
<evidence type="ECO:0000305" key="13"/>
<comment type="function">
    <text evidence="1 6 11">Part of the gene cluster that mediates the biosynthesis of fusaric acid, a mycotoxin with low to moderate toxicity to animals and humans, but with high phytotoxic properties (PubMed:22652150, PubMed:25372119). L-aspartate is suggested as fusaric acid amino acid precursor that is activated and further processed to O-acetyl-L-homoserine by cluster enzymes aspartate kinase FUB3 and homoserine O-acetyltransferase FUB5, as well as enzymes of the primary metabolism (By similarity). The polyketide synthase (PKS) FUB1 generates the triketide trans-2-hexenal which is presumptively released by the hydrolase FUB4 and linked to the NRPS-bound amino acid precursor by NAD(P)-dependent dehydrogenase FUB6 (By similarity). FUB1, FUB4, and the non-canonical NRPS Fub8 may form an enzyme complex (By similarity). Further processing of the NRPS-bound intermediate might be carried out by FUB6 and the sulfhydrylase FUB7, enabling a spontaneous electrocyclization to close the carbon backbone of fusaric acid (By similarity). Dihydrofusaric acid is likely to be released via reduction by the thioester reductase (TR) domain of FUB8 whereupon the final oxidation to fusaric acid may (also) be performed by the FMN-dependent dehydrogenase FUB9 (By similarity).</text>
</comment>
<comment type="pathway">
    <text evidence="6 11">Mycotoxin biosynthesis.</text>
</comment>
<comment type="induction">
    <text evidence="7">Expression is positively regulated by the secondary metabolism regulator LAE1 (PubMed:22713715).</text>
</comment>
<comment type="disruption phenotype">
    <text evidence="11">Does not alter fusaric acid production (PubMed:25372119).</text>
</comment>
<comment type="biotechnology">
    <text evidence="2 3 4 5 8 9 10">Fusaric acid is phytotoxic to plants such as cotton and banana (PubMed:20955724, PubMed:23922960). It has been shown to induce programmed cell death in plants (PubMed:16868776, PubMed:23838885). In addition to a mild toxicity to animals, fusaric acid exhibits acanthamoebicidal, antioomycete, and antimycobacterial activities (PubMed:17927749, PubMed:21811925, PubMed:22864988).</text>
</comment>
<comment type="similarity">
    <text evidence="13">Belongs to the YciI family.</text>
</comment>
<proteinExistence type="evidence at protein level"/>
<name>FUB2_GIBM7</name>
<protein>
    <recommendedName>
        <fullName evidence="12">Fusaric acid biosynthesis protein 2</fullName>
    </recommendedName>
</protein>
<organism>
    <name type="scientific">Gibberella moniliformis (strain M3125 / FGSC 7600)</name>
    <name type="common">Maize ear and stalk rot fungus</name>
    <name type="synonym">Fusarium verticillioides</name>
    <dbReference type="NCBI Taxonomy" id="334819"/>
    <lineage>
        <taxon>Eukaryota</taxon>
        <taxon>Fungi</taxon>
        <taxon>Dikarya</taxon>
        <taxon>Ascomycota</taxon>
        <taxon>Pezizomycotina</taxon>
        <taxon>Sordariomycetes</taxon>
        <taxon>Hypocreomycetidae</taxon>
        <taxon>Hypocreales</taxon>
        <taxon>Nectriaceae</taxon>
        <taxon>Fusarium</taxon>
        <taxon>Fusarium fujikuroi species complex</taxon>
    </lineage>
</organism>
<accession>W7N2B2</accession>
<keyword id="KW-1185">Reference proteome</keyword>
<reference key="1">
    <citation type="journal article" date="2010" name="Nature">
        <title>Comparative genomics reveals mobile pathogenicity chromosomes in Fusarium.</title>
        <authorList>
            <person name="Ma L.-J."/>
            <person name="van der Does H.C."/>
            <person name="Borkovich K.A."/>
            <person name="Coleman J.J."/>
            <person name="Daboussi M.-J."/>
            <person name="Di Pietro A."/>
            <person name="Dufresne M."/>
            <person name="Freitag M."/>
            <person name="Grabherr M."/>
            <person name="Henrissat B."/>
            <person name="Houterman P.M."/>
            <person name="Kang S."/>
            <person name="Shim W.-B."/>
            <person name="Woloshuk C."/>
            <person name="Xie X."/>
            <person name="Xu J.-R."/>
            <person name="Antoniw J."/>
            <person name="Baker S.E."/>
            <person name="Bluhm B.H."/>
            <person name="Breakspear A."/>
            <person name="Brown D.W."/>
            <person name="Butchko R.A.E."/>
            <person name="Chapman S."/>
            <person name="Coulson R."/>
            <person name="Coutinho P.M."/>
            <person name="Danchin E.G.J."/>
            <person name="Diener A."/>
            <person name="Gale L.R."/>
            <person name="Gardiner D.M."/>
            <person name="Goff S."/>
            <person name="Hammond-Kosack K.E."/>
            <person name="Hilburn K."/>
            <person name="Hua-Van A."/>
            <person name="Jonkers W."/>
            <person name="Kazan K."/>
            <person name="Kodira C.D."/>
            <person name="Koehrsen M."/>
            <person name="Kumar L."/>
            <person name="Lee Y.-H."/>
            <person name="Li L."/>
            <person name="Manners J.M."/>
            <person name="Miranda-Saavedra D."/>
            <person name="Mukherjee M."/>
            <person name="Park G."/>
            <person name="Park J."/>
            <person name="Park S.-Y."/>
            <person name="Proctor R.H."/>
            <person name="Regev A."/>
            <person name="Ruiz-Roldan M.C."/>
            <person name="Sain D."/>
            <person name="Sakthikumar S."/>
            <person name="Sykes S."/>
            <person name="Schwartz D.C."/>
            <person name="Turgeon B.G."/>
            <person name="Wapinski I."/>
            <person name="Yoder O."/>
            <person name="Young S."/>
            <person name="Zeng Q."/>
            <person name="Zhou S."/>
            <person name="Galagan J."/>
            <person name="Cuomo C.A."/>
            <person name="Kistler H.C."/>
            <person name="Rep M."/>
        </authorList>
    </citation>
    <scope>NUCLEOTIDE SEQUENCE [LARGE SCALE GENOMIC DNA]</scope>
    <source>
        <strain>M3125 / FGSC 7600</strain>
    </source>
</reference>
<reference key="2">
    <citation type="journal article" date="2006" name="Planta">
        <title>Fusaric acid induces apoptosis in saffron root-tip cells: roles of caspase-like activity, cytochrome c, and H2O2.</title>
        <authorList>
            <person name="Samadi L."/>
            <person name="Shahsavan Behboodi B."/>
        </authorList>
    </citation>
    <scope>BIOTECHNOLOGY</scope>
</reference>
<reference key="3">
    <citation type="journal article" date="2008" name="J. Appl. Microbiol.">
        <title>Bikaverin and fusaric acid from Fusarium oxysporum show antioomycete activity against Phytophthora infestans.</title>
        <authorList>
            <person name="Son S.W."/>
            <person name="Kim H.Y."/>
            <person name="Choi G.J."/>
            <person name="Lim H.K."/>
            <person name="Jang K.S."/>
            <person name="Lee S.O."/>
            <person name="Lee S."/>
            <person name="Sung N.D."/>
            <person name="Kim J.C."/>
        </authorList>
    </citation>
    <scope>BIOTECHNOLOGY</scope>
</reference>
<reference key="4">
    <citation type="journal article" date="2011" name="Arch. Pharm. Res.">
        <title>Antimycobacterial activity of fusaric acid from a mangrove endophyte and its metal complexes.</title>
        <authorList>
            <person name="Pan J.H."/>
            <person name="Chen Y."/>
            <person name="Huang Y.H."/>
            <person name="Tao Y.W."/>
            <person name="Wang J."/>
            <person name="Li Y."/>
            <person name="Peng Y."/>
            <person name="Dong T."/>
            <person name="Lai X.M."/>
            <person name="Lin Y.C."/>
        </authorList>
    </citation>
    <scope>BIOTECHNOLOGY</scope>
</reference>
<reference key="5">
    <citation type="journal article" date="2011" name="Toxicon">
        <title>Phytotoxicity of fusaric acid and analogs to cotton.</title>
        <authorList>
            <person name="Stipanovic R.D."/>
            <person name="Puckhaber L.S."/>
            <person name="Liu J."/>
            <person name="Bell A.A."/>
        </authorList>
    </citation>
    <scope>BIOTECHNOLOGY</scope>
</reference>
<reference key="6">
    <citation type="journal article" date="2012" name="Fungal Genet. Biol.">
        <title>Identification of gene clusters associated with fusaric acid, fusarin, and perithecial pigment production in Fusarium verticillioides.</title>
        <authorList>
            <person name="Brown D.W."/>
            <person name="Butchko R.A."/>
            <person name="Busman M."/>
            <person name="Proctor R.H."/>
        </authorList>
    </citation>
    <scope>FUNCTION</scope>
</reference>
<reference key="7">
    <citation type="journal article" date="2012" name="Fungal Genet. Biol.">
        <title>Lae1 regulates expression of multiple secondary metabolite gene clusters in Fusarium verticillioides.</title>
        <authorList>
            <person name="Butchko R.A."/>
            <person name="Brown D.W."/>
            <person name="Busman M."/>
            <person name="Tudzynski B."/>
            <person name="Wiemann P."/>
        </authorList>
    </citation>
    <scope>INDUCTION</scope>
</reference>
<reference key="8">
    <citation type="journal article" date="2012" name="Planta Med.">
        <title>In vitro acanthamoebicidal activity of fusaric acid and dehydrofusaric acid from an endophytic fungus Fusarium sp. Tlau3.</title>
        <authorList>
            <person name="Boonman N."/>
            <person name="Prachya S."/>
            <person name="Boonmee A."/>
            <person name="Kittakoop P."/>
            <person name="Wiyakrutta S."/>
            <person name="Sriubolmas N."/>
            <person name="Warit S."/>
            <person name="Dharmkrong-At Chusattayanond A."/>
        </authorList>
    </citation>
    <scope>BIOTECHNOLOGY</scope>
</reference>
<reference key="9">
    <citation type="journal article" date="2013" name="Planta">
        <title>Fusaric acid induction of programmed cell death modulated through nitric oxide signalling in tobacco suspension cells.</title>
        <authorList>
            <person name="Jiao J."/>
            <person name="Zhou B."/>
            <person name="Zhu X."/>
            <person name="Gao Z."/>
            <person name="Liang Y."/>
        </authorList>
    </citation>
    <scope>BIOTECHNOLOGY</scope>
</reference>
<reference key="10">
    <citation type="journal article" date="2013" name="PLoS ONE">
        <title>Contamination of bananas with beauvericin and fusaric acid produced by Fusarium oxysporum f. sp. cubense.</title>
        <authorList>
            <person name="Li C."/>
            <person name="Zuo C."/>
            <person name="Deng G."/>
            <person name="Kuang R."/>
            <person name="Yang Q."/>
            <person name="Hu C."/>
            <person name="Sheng O."/>
            <person name="Zhang S."/>
            <person name="Ma L."/>
            <person name="Wei Y."/>
            <person name="Yang J."/>
            <person name="Liu S."/>
            <person name="Biswas M.K."/>
            <person name="Viljoen A."/>
            <person name="Yi G."/>
        </authorList>
    </citation>
    <scope>BIOTECHNOLOGY</scope>
</reference>
<reference key="11">
    <citation type="journal article" date="2015" name="Mol. Plant Microbe Interact.">
        <title>Identification of a 12-gene fusaric acid biosynthetic gene cluster in Fusarium species through comparative and functional genomics.</title>
        <authorList>
            <person name="Brown D.W."/>
            <person name="Lee S.H."/>
            <person name="Kim L.H."/>
            <person name="Ryu J.G."/>
            <person name="Lee S."/>
            <person name="Seo Y."/>
            <person name="Kim Y.H."/>
            <person name="Busman M."/>
            <person name="Yun S.H."/>
            <person name="Proctor R.H."/>
            <person name="Lee T."/>
        </authorList>
    </citation>
    <scope>FUNCTION</scope>
    <scope>DISRUPTION PHENOTYPE</scope>
</reference>
<sequence length="104" mass="11683">MASELKEYLVIIPDLPDVLAKRQVLLKPHNQDAAPLVKAGRVPFFGSTLAHHSAEGQQVAENGTVMIIKAESEEEIKEIIRKDIFTIEGVWDFGRLSIWPFKSK</sequence>